<gene>
    <name evidence="1" type="primary">psbC</name>
</gene>
<proteinExistence type="inferred from homology"/>
<feature type="propeptide" id="PRO_0000431202" evidence="1">
    <location>
        <begin position="1"/>
        <end position="2"/>
    </location>
</feature>
<feature type="chain" id="PRO_0000361485" description="Photosystem II CP43 reaction center protein" evidence="1">
    <location>
        <begin position="3"/>
        <end position="461"/>
    </location>
</feature>
<feature type="transmembrane region" description="Helical" evidence="1">
    <location>
        <begin position="57"/>
        <end position="81"/>
    </location>
</feature>
<feature type="transmembrane region" description="Helical" evidence="1">
    <location>
        <begin position="122"/>
        <end position="143"/>
    </location>
</feature>
<feature type="transmembrane region" description="Helical" evidence="1">
    <location>
        <begin position="166"/>
        <end position="188"/>
    </location>
</feature>
<feature type="transmembrane region" description="Helical" evidence="1">
    <location>
        <begin position="243"/>
        <end position="263"/>
    </location>
</feature>
<feature type="transmembrane region" description="Helical" evidence="1">
    <location>
        <begin position="279"/>
        <end position="300"/>
    </location>
</feature>
<feature type="transmembrane region" description="Helical" evidence="1">
    <location>
        <begin position="435"/>
        <end position="459"/>
    </location>
</feature>
<feature type="binding site" evidence="1">
    <location>
        <position position="355"/>
    </location>
    <ligand>
        <name>[CaMn4O5] cluster</name>
        <dbReference type="ChEBI" id="CHEBI:189552"/>
    </ligand>
</feature>
<feature type="modified residue" description="N-acetylthreonine" evidence="1">
    <location>
        <position position="3"/>
    </location>
</feature>
<feature type="modified residue" description="Phosphothreonine" evidence="1">
    <location>
        <position position="3"/>
    </location>
</feature>
<comment type="function">
    <text evidence="1">One of the components of the core complex of photosystem II (PSII). It binds chlorophyll and helps catalyze the primary light-induced photochemical processes of PSII. PSII is a light-driven water:plastoquinone oxidoreductase, using light energy to abstract electrons from H(2)O, generating O(2) and a proton gradient subsequently used for ATP formation.</text>
</comment>
<comment type="cofactor">
    <text evidence="1">Binds multiple chlorophylls and provides some of the ligands for the Ca-4Mn-5O cluster of the oxygen-evolving complex. It may also provide a ligand for a Cl- that is required for oxygen evolution. PSII binds additional chlorophylls, carotenoids and specific lipids.</text>
</comment>
<comment type="subunit">
    <text evidence="1">PSII is composed of 1 copy each of membrane proteins PsbA, PsbB, PsbC, PsbD, PsbE, PsbF, PsbH, PsbI, PsbJ, PsbK, PsbL, PsbM, PsbT, PsbX, PsbY, PsbZ, Psb30/Ycf12, at least 3 peripheral proteins of the oxygen-evolving complex and a large number of cofactors. It forms dimeric complexes.</text>
</comment>
<comment type="subcellular location">
    <subcellularLocation>
        <location evidence="1">Plastid</location>
        <location evidence="1">Chloroplast thylakoid membrane</location>
        <topology evidence="1">Multi-pass membrane protein</topology>
    </subcellularLocation>
</comment>
<comment type="similarity">
    <text evidence="1">Belongs to the PsbB/PsbC family. PsbC subfamily.</text>
</comment>
<protein>
    <recommendedName>
        <fullName evidence="1">Photosystem II CP43 reaction center protein</fullName>
    </recommendedName>
    <alternativeName>
        <fullName evidence="1">PSII 43 kDa protein</fullName>
    </alternativeName>
    <alternativeName>
        <fullName evidence="1">Protein CP-43</fullName>
    </alternativeName>
</protein>
<geneLocation type="chloroplast"/>
<keyword id="KW-0007">Acetylation</keyword>
<keyword id="KW-0148">Chlorophyll</keyword>
<keyword id="KW-0150">Chloroplast</keyword>
<keyword id="KW-0157">Chromophore</keyword>
<keyword id="KW-0464">Manganese</keyword>
<keyword id="KW-0472">Membrane</keyword>
<keyword id="KW-0479">Metal-binding</keyword>
<keyword id="KW-0597">Phosphoprotein</keyword>
<keyword id="KW-0602">Photosynthesis</keyword>
<keyword id="KW-0604">Photosystem II</keyword>
<keyword id="KW-0934">Plastid</keyword>
<keyword id="KW-0793">Thylakoid</keyword>
<keyword id="KW-0812">Transmembrane</keyword>
<keyword id="KW-1133">Transmembrane helix</keyword>
<sequence length="461" mass="50285">METLFNGTLSLGGRDQETTGFAWWAGNARLTNLSGKLLGAHVAHAGLIVFWAGAMNLFEVAHFVPEKPMYEQGLILLPHLATLGWGVGPGGEVIDTFPYFVSGVLHLVSSAVLGFGGIYHALIGPETLEESFPFFGYVWKDKSKMTTILGIHLILLGAGAFLLVLKSVYFGGVYDTWAPGGGDVRKITNLTLSPSILFGYLLKSPFGGEGWIISVDNLEDIIGGHVWLGSICIFGGIWHILTKPFAWARRAFVWSGEAYLSYSLGALSIFGFTACCFVWFNNTAYPSEFYGPTGPEASQAQAFTFLVRDQRLGASIGSAQGPTGLGKYLMRSPTGEIIFGGETMRFWDLRAPWLEPLRGPNGLDLNKLRRDIQPWQERRSAEYMTHAPLGSLNSVGGVATEINAVNYVSPRSWLATSHFVLGFFFFVGHLWHAGRARAAAAGFEKGIDRDTEPVLSMTPLN</sequence>
<dbReference type="EMBL" id="AP004638">
    <property type="protein sequence ID" value="BAB84212.1"/>
    <property type="molecule type" value="Genomic_DNA"/>
</dbReference>
<dbReference type="RefSeq" id="NP_569625.2">
    <property type="nucleotide sequence ID" value="NC_003386.1"/>
</dbReference>
<dbReference type="SMR" id="Q8WI20"/>
<dbReference type="GeneID" id="2545140"/>
<dbReference type="GO" id="GO:0009535">
    <property type="term" value="C:chloroplast thylakoid membrane"/>
    <property type="evidence" value="ECO:0007669"/>
    <property type="project" value="UniProtKB-SubCell"/>
</dbReference>
<dbReference type="GO" id="GO:0009523">
    <property type="term" value="C:photosystem II"/>
    <property type="evidence" value="ECO:0007669"/>
    <property type="project" value="UniProtKB-KW"/>
</dbReference>
<dbReference type="GO" id="GO:0016168">
    <property type="term" value="F:chlorophyll binding"/>
    <property type="evidence" value="ECO:0007669"/>
    <property type="project" value="UniProtKB-UniRule"/>
</dbReference>
<dbReference type="GO" id="GO:0045156">
    <property type="term" value="F:electron transporter, transferring electrons within the cyclic electron transport pathway of photosynthesis activity"/>
    <property type="evidence" value="ECO:0007669"/>
    <property type="project" value="InterPro"/>
</dbReference>
<dbReference type="GO" id="GO:0046872">
    <property type="term" value="F:metal ion binding"/>
    <property type="evidence" value="ECO:0007669"/>
    <property type="project" value="UniProtKB-KW"/>
</dbReference>
<dbReference type="GO" id="GO:0009772">
    <property type="term" value="P:photosynthetic electron transport in photosystem II"/>
    <property type="evidence" value="ECO:0007669"/>
    <property type="project" value="InterPro"/>
</dbReference>
<dbReference type="FunFam" id="1.10.10.670:FF:000001">
    <property type="entry name" value="Photosystem II CP43 reaction center protein"/>
    <property type="match status" value="1"/>
</dbReference>
<dbReference type="Gene3D" id="1.10.10.670">
    <property type="entry name" value="photosystem ii from thermosynechococcus elongatus"/>
    <property type="match status" value="1"/>
</dbReference>
<dbReference type="HAMAP" id="MF_01496">
    <property type="entry name" value="PSII_PsbC_CP43"/>
    <property type="match status" value="1"/>
</dbReference>
<dbReference type="InterPro" id="IPR000932">
    <property type="entry name" value="PS_antenna-like"/>
</dbReference>
<dbReference type="InterPro" id="IPR036001">
    <property type="entry name" value="PS_II_antenna-like_sf"/>
</dbReference>
<dbReference type="InterPro" id="IPR005869">
    <property type="entry name" value="PSII_PsbC"/>
</dbReference>
<dbReference type="InterPro" id="IPR044900">
    <property type="entry name" value="PSII_PsbC_sf"/>
</dbReference>
<dbReference type="NCBIfam" id="TIGR01153">
    <property type="entry name" value="psbC"/>
    <property type="match status" value="1"/>
</dbReference>
<dbReference type="Pfam" id="PF00421">
    <property type="entry name" value="PSII"/>
    <property type="match status" value="1"/>
</dbReference>
<dbReference type="SUPFAM" id="SSF161077">
    <property type="entry name" value="Photosystem II antenna protein-like"/>
    <property type="match status" value="1"/>
</dbReference>
<organism>
    <name type="scientific">Psilotum nudum</name>
    <name type="common">Whisk fern</name>
    <name type="synonym">Lycopodium nudum</name>
    <dbReference type="NCBI Taxonomy" id="3240"/>
    <lineage>
        <taxon>Eukaryota</taxon>
        <taxon>Viridiplantae</taxon>
        <taxon>Streptophyta</taxon>
        <taxon>Embryophyta</taxon>
        <taxon>Tracheophyta</taxon>
        <taxon>Polypodiopsida</taxon>
        <taxon>Ophioglossidae</taxon>
        <taxon>Psilotales</taxon>
        <taxon>Psilotaceae</taxon>
        <taxon>Psilotum</taxon>
    </lineage>
</organism>
<reference key="1">
    <citation type="journal article" date="2004" name="Mol. Biol. Evol.">
        <title>Chloroplast phylogeny indicates that bryophytes are monophyletic.</title>
        <authorList>
            <person name="Nishiyama T."/>
            <person name="Wolf P.G."/>
            <person name="Kugita M."/>
            <person name="Sinclair R.B."/>
            <person name="Sugita M."/>
            <person name="Sugiura C."/>
            <person name="Wakasugi T."/>
            <person name="Yamada K."/>
            <person name="Yoshinaga K."/>
            <person name="Yamaguchi K."/>
            <person name="Ueda K."/>
            <person name="Hasebe M."/>
        </authorList>
    </citation>
    <scope>NUCLEOTIDE SEQUENCE [LARGE SCALE GENOMIC DNA]</scope>
    <source>
        <strain>Kingyoku</strain>
    </source>
</reference>
<name>PSBC_PSINU</name>
<evidence type="ECO:0000255" key="1">
    <source>
        <dbReference type="HAMAP-Rule" id="MF_01496"/>
    </source>
</evidence>
<accession>Q8WI20</accession>